<feature type="chain" id="PRO_0000071308" description="Uncharacterized protein L671">
    <location>
        <begin position="1"/>
        <end position="152"/>
    </location>
</feature>
<protein>
    <recommendedName>
        <fullName>Uncharacterized protein L671</fullName>
    </recommendedName>
</protein>
<accession>Q5UNT3</accession>
<proteinExistence type="predicted"/>
<keyword id="KW-1185">Reference proteome</keyword>
<name>YL671_MIMIV</name>
<reference key="1">
    <citation type="journal article" date="2004" name="Science">
        <title>The 1.2-megabase genome sequence of Mimivirus.</title>
        <authorList>
            <person name="Raoult D."/>
            <person name="Audic S."/>
            <person name="Robert C."/>
            <person name="Abergel C."/>
            <person name="Renesto P."/>
            <person name="Ogata H."/>
            <person name="La Scola B."/>
            <person name="Susan M."/>
            <person name="Claverie J.-M."/>
        </authorList>
    </citation>
    <scope>NUCLEOTIDE SEQUENCE [LARGE SCALE GENOMIC DNA]</scope>
    <source>
        <strain>Rowbotham-Bradford</strain>
    </source>
</reference>
<gene>
    <name type="ordered locus">MIMI_L671</name>
</gene>
<dbReference type="EMBL" id="AY653733">
    <property type="protein sequence ID" value="AAV50932.1"/>
    <property type="molecule type" value="Genomic_DNA"/>
</dbReference>
<dbReference type="KEGG" id="vg:9925317"/>
<dbReference type="OrthoDB" id="38589at10239"/>
<dbReference type="Proteomes" id="UP000001134">
    <property type="component" value="Genome"/>
</dbReference>
<organismHost>
    <name type="scientific">Acanthamoeba polyphaga</name>
    <name type="common">Amoeba</name>
    <dbReference type="NCBI Taxonomy" id="5757"/>
</organismHost>
<organism>
    <name type="scientific">Acanthamoeba polyphaga mimivirus</name>
    <name type="common">APMV</name>
    <dbReference type="NCBI Taxonomy" id="212035"/>
    <lineage>
        <taxon>Viruses</taxon>
        <taxon>Varidnaviria</taxon>
        <taxon>Bamfordvirae</taxon>
        <taxon>Nucleocytoviricota</taxon>
        <taxon>Megaviricetes</taxon>
        <taxon>Imitervirales</taxon>
        <taxon>Mimiviridae</taxon>
        <taxon>Megamimivirinae</taxon>
        <taxon>Mimivirus</taxon>
        <taxon>Mimivirus bradfordmassiliense</taxon>
    </lineage>
</organism>
<sequence>MDKKCQLCQSNVEIGLETNGKFWCKFIGPNKFFICLEGEFEILCDYIVAQTGIICLDCIKNYDYVPYKSVSCDLCLKNFHSIVPGSTCQGHRCSSEVFSDHIEGYYGSYKYDKDIINFVSKRPNNIKIGHNICDGCIDNLINTGICQTSSNN</sequence>